<sequence>MYRILVINPGSSSTKVAVFEDEKKIAEKNLTHSAEELKKFKKSIDQEPLRRKAVEDFIDEVGYRIEDFSAIAARGGVLEPVPGGTYVVDEYMVDYLINRSPVDHVSNLAAVISYKLGKPYGIPCFVVDPVSVDEMCDEARFSGIPEIERKSYSHALNIKAVLRKVSREMGKTPEEVKIVVAHLGSGISVCACKNGKIIDVNNANDEGPFSIERTGELPVGDVVKTAYSSKHSAAELKEEFTKKGGLLAYLGTKDLRKALDSMETSRKAKLVVEAMAYQIAKEIGGMCAVLGDKPDAIVITGGMAHENRFVRMITDYIEKFGKVEVIPGELEMEALALGVLRVLRGEEKAKDYRSVIE</sequence>
<comment type="catalytic activity">
    <reaction evidence="1">
        <text>butanoate + ATP = butanoyl phosphate + ADP</text>
        <dbReference type="Rhea" id="RHEA:13585"/>
        <dbReference type="ChEBI" id="CHEBI:17968"/>
        <dbReference type="ChEBI" id="CHEBI:30616"/>
        <dbReference type="ChEBI" id="CHEBI:58079"/>
        <dbReference type="ChEBI" id="CHEBI:456216"/>
        <dbReference type="EC" id="2.7.2.7"/>
    </reaction>
</comment>
<comment type="subcellular location">
    <subcellularLocation>
        <location evidence="1">Cytoplasm</location>
    </subcellularLocation>
</comment>
<comment type="similarity">
    <text evidence="1">Belongs to the acetokinase family.</text>
</comment>
<organism>
    <name type="scientific">Thermotoga petrophila (strain ATCC BAA-488 / DSM 13995 / JCM 10881 / RKU-1)</name>
    <dbReference type="NCBI Taxonomy" id="390874"/>
    <lineage>
        <taxon>Bacteria</taxon>
        <taxon>Thermotogati</taxon>
        <taxon>Thermotogota</taxon>
        <taxon>Thermotogae</taxon>
        <taxon>Thermotogales</taxon>
        <taxon>Thermotogaceae</taxon>
        <taxon>Thermotoga</taxon>
    </lineage>
</organism>
<accession>A5ILI6</accession>
<proteinExistence type="inferred from homology"/>
<gene>
    <name evidence="1" type="primary">buk</name>
    <name type="ordered locus">Tpet_1041</name>
</gene>
<name>BUK_THEP1</name>
<reference key="1">
    <citation type="submission" date="2007-05" db="EMBL/GenBank/DDBJ databases">
        <title>Complete sequence of Thermotoga petrophila RKU-1.</title>
        <authorList>
            <consortium name="US DOE Joint Genome Institute"/>
            <person name="Copeland A."/>
            <person name="Lucas S."/>
            <person name="Lapidus A."/>
            <person name="Barry K."/>
            <person name="Glavina del Rio T."/>
            <person name="Dalin E."/>
            <person name="Tice H."/>
            <person name="Pitluck S."/>
            <person name="Sims D."/>
            <person name="Brettin T."/>
            <person name="Bruce D."/>
            <person name="Detter J.C."/>
            <person name="Han C."/>
            <person name="Tapia R."/>
            <person name="Schmutz J."/>
            <person name="Larimer F."/>
            <person name="Land M."/>
            <person name="Hauser L."/>
            <person name="Kyrpides N."/>
            <person name="Mikhailova N."/>
            <person name="Nelson K."/>
            <person name="Gogarten J.P."/>
            <person name="Noll K."/>
            <person name="Richardson P."/>
        </authorList>
    </citation>
    <scope>NUCLEOTIDE SEQUENCE [LARGE SCALE GENOMIC DNA]</scope>
    <source>
        <strain>ATCC BAA-488 / DSM 13995 / JCM 10881 / RKU-1</strain>
    </source>
</reference>
<dbReference type="EC" id="2.7.2.7" evidence="1"/>
<dbReference type="EMBL" id="CP000702">
    <property type="protein sequence ID" value="ABQ47059.1"/>
    <property type="molecule type" value="Genomic_DNA"/>
</dbReference>
<dbReference type="RefSeq" id="WP_011943589.1">
    <property type="nucleotide sequence ID" value="NC_009486.1"/>
</dbReference>
<dbReference type="SMR" id="A5ILI6"/>
<dbReference type="STRING" id="390874.Tpet_1041"/>
<dbReference type="KEGG" id="tpt:Tpet_1041"/>
<dbReference type="eggNOG" id="COG3426">
    <property type="taxonomic scope" value="Bacteria"/>
</dbReference>
<dbReference type="HOGENOM" id="CLU_048716_0_0_0"/>
<dbReference type="Proteomes" id="UP000006558">
    <property type="component" value="Chromosome"/>
</dbReference>
<dbReference type="GO" id="GO:0005737">
    <property type="term" value="C:cytoplasm"/>
    <property type="evidence" value="ECO:0007669"/>
    <property type="project" value="UniProtKB-SubCell"/>
</dbReference>
<dbReference type="GO" id="GO:0008776">
    <property type="term" value="F:acetate kinase activity"/>
    <property type="evidence" value="ECO:0007669"/>
    <property type="project" value="TreeGrafter"/>
</dbReference>
<dbReference type="GO" id="GO:0005524">
    <property type="term" value="F:ATP binding"/>
    <property type="evidence" value="ECO:0007669"/>
    <property type="project" value="UniProtKB-KW"/>
</dbReference>
<dbReference type="GO" id="GO:0047761">
    <property type="term" value="F:butyrate kinase activity"/>
    <property type="evidence" value="ECO:0007669"/>
    <property type="project" value="UniProtKB-UniRule"/>
</dbReference>
<dbReference type="GO" id="GO:0006083">
    <property type="term" value="P:acetate metabolic process"/>
    <property type="evidence" value="ECO:0007669"/>
    <property type="project" value="TreeGrafter"/>
</dbReference>
<dbReference type="CDD" id="cd24011">
    <property type="entry name" value="ASKHA_NBD_BK"/>
    <property type="match status" value="1"/>
</dbReference>
<dbReference type="Gene3D" id="3.30.420.40">
    <property type="match status" value="2"/>
</dbReference>
<dbReference type="HAMAP" id="MF_00542">
    <property type="entry name" value="Butyrate_kinase"/>
    <property type="match status" value="1"/>
</dbReference>
<dbReference type="InterPro" id="IPR000890">
    <property type="entry name" value="Aliphatic_acid_kin_short-chain"/>
</dbReference>
<dbReference type="InterPro" id="IPR023865">
    <property type="entry name" value="Aliphatic_acid_kinase_CS"/>
</dbReference>
<dbReference type="InterPro" id="IPR043129">
    <property type="entry name" value="ATPase_NBD"/>
</dbReference>
<dbReference type="InterPro" id="IPR011245">
    <property type="entry name" value="Butyrate_kin"/>
</dbReference>
<dbReference type="NCBIfam" id="TIGR02707">
    <property type="entry name" value="butyr_kinase"/>
    <property type="match status" value="1"/>
</dbReference>
<dbReference type="NCBIfam" id="NF002834">
    <property type="entry name" value="PRK03011.1-5"/>
    <property type="match status" value="1"/>
</dbReference>
<dbReference type="PANTHER" id="PTHR21060">
    <property type="entry name" value="ACETATE KINASE"/>
    <property type="match status" value="1"/>
</dbReference>
<dbReference type="PANTHER" id="PTHR21060:SF20">
    <property type="entry name" value="BUTYRATE KINASE 1-RELATED"/>
    <property type="match status" value="1"/>
</dbReference>
<dbReference type="Pfam" id="PF00871">
    <property type="entry name" value="Acetate_kinase"/>
    <property type="match status" value="1"/>
</dbReference>
<dbReference type="PIRSF" id="PIRSF036458">
    <property type="entry name" value="Butyrate_kin"/>
    <property type="match status" value="1"/>
</dbReference>
<dbReference type="PRINTS" id="PR00471">
    <property type="entry name" value="ACETATEKNASE"/>
</dbReference>
<dbReference type="SUPFAM" id="SSF53067">
    <property type="entry name" value="Actin-like ATPase domain"/>
    <property type="match status" value="2"/>
</dbReference>
<dbReference type="PROSITE" id="PS01075">
    <property type="entry name" value="ACETATE_KINASE_1"/>
    <property type="match status" value="1"/>
</dbReference>
<dbReference type="PROSITE" id="PS01076">
    <property type="entry name" value="ACETATE_KINASE_2"/>
    <property type="match status" value="1"/>
</dbReference>
<keyword id="KW-0067">ATP-binding</keyword>
<keyword id="KW-0963">Cytoplasm</keyword>
<keyword id="KW-0418">Kinase</keyword>
<keyword id="KW-0547">Nucleotide-binding</keyword>
<keyword id="KW-0808">Transferase</keyword>
<feature type="chain" id="PRO_1000061069" description="Probable butyrate kinase">
    <location>
        <begin position="1"/>
        <end position="357"/>
    </location>
</feature>
<protein>
    <recommendedName>
        <fullName evidence="1">Probable butyrate kinase</fullName>
        <shortName evidence="1">BK</shortName>
        <ecNumber evidence="1">2.7.2.7</ecNumber>
    </recommendedName>
    <alternativeName>
        <fullName evidence="1">Branched-chain carboxylic acid kinase</fullName>
    </alternativeName>
</protein>
<evidence type="ECO:0000255" key="1">
    <source>
        <dbReference type="HAMAP-Rule" id="MF_00542"/>
    </source>
</evidence>